<accession>Q2G0D4</accession>
<feature type="signal peptide" evidence="1">
    <location>
        <begin position="1"/>
        <end position="25"/>
    </location>
</feature>
<feature type="chain" id="PRO_5004207887" description="Probable autolysin SsaALP" evidence="1">
    <location>
        <begin position="26"/>
        <end position="265"/>
    </location>
</feature>
<feature type="domain" description="LysM 1" evidence="3">
    <location>
        <begin position="27"/>
        <end position="70"/>
    </location>
</feature>
<feature type="domain" description="LysM 2" evidence="3">
    <location>
        <begin position="89"/>
        <end position="132"/>
    </location>
</feature>
<feature type="domain" description="Peptidase C51" evidence="2">
    <location>
        <begin position="141"/>
        <end position="265"/>
    </location>
</feature>
<feature type="region of interest" description="Disordered" evidence="4">
    <location>
        <begin position="72"/>
        <end position="92"/>
    </location>
</feature>
<feature type="compositionally biased region" description="Polar residues" evidence="4">
    <location>
        <begin position="74"/>
        <end position="92"/>
    </location>
</feature>
<name>SSAAL_STAA8</name>
<evidence type="ECO:0000255" key="1"/>
<evidence type="ECO:0000255" key="2">
    <source>
        <dbReference type="PROSITE-ProRule" id="PRU00048"/>
    </source>
</evidence>
<evidence type="ECO:0000255" key="3">
    <source>
        <dbReference type="PROSITE-ProRule" id="PRU01118"/>
    </source>
</evidence>
<evidence type="ECO:0000256" key="4">
    <source>
        <dbReference type="SAM" id="MobiDB-lite"/>
    </source>
</evidence>
<evidence type="ECO:0000269" key="5">
    <source>
    </source>
</evidence>
<evidence type="ECO:0000305" key="6"/>
<evidence type="ECO:0000312" key="7">
    <source>
        <dbReference type="EMBL" id="ABD29804.1"/>
    </source>
</evidence>
<protein>
    <recommendedName>
        <fullName evidence="6">Probable autolysin SsaALP</fullName>
        <ecNumber evidence="5">3.5.1.28</ecNumber>
    </recommendedName>
</protein>
<proteinExistence type="evidence at protein level"/>
<dbReference type="EC" id="3.5.1.28" evidence="5"/>
<dbReference type="EMBL" id="CP000253">
    <property type="protein sequence ID" value="ABD29804.1"/>
    <property type="molecule type" value="Genomic_DNA"/>
</dbReference>
<dbReference type="RefSeq" id="WP_000731644.1">
    <property type="nucleotide sequence ID" value="NZ_LS483365.1"/>
</dbReference>
<dbReference type="RefSeq" id="YP_499230.1">
    <property type="nucleotide sequence ID" value="NC_007795.1"/>
</dbReference>
<dbReference type="SMR" id="Q2G0D4"/>
<dbReference type="STRING" id="93061.SAOUHSC_00671"/>
<dbReference type="CAZy" id="CBM50">
    <property type="family name" value="Carbohydrate-Binding Module Family 50"/>
</dbReference>
<dbReference type="PaxDb" id="1280-SAXN108_0732"/>
<dbReference type="GeneID" id="3919434"/>
<dbReference type="KEGG" id="sao:SAOUHSC_00671"/>
<dbReference type="PATRIC" id="fig|93061.5.peg.602"/>
<dbReference type="eggNOG" id="COG1388">
    <property type="taxonomic scope" value="Bacteria"/>
</dbReference>
<dbReference type="eggNOG" id="COG3942">
    <property type="taxonomic scope" value="Bacteria"/>
</dbReference>
<dbReference type="HOGENOM" id="CLU_016043_11_0_9"/>
<dbReference type="OrthoDB" id="9813368at2"/>
<dbReference type="Proteomes" id="UP000008816">
    <property type="component" value="Chromosome"/>
</dbReference>
<dbReference type="GO" id="GO:0008932">
    <property type="term" value="F:lytic endotransglycosylase activity"/>
    <property type="evidence" value="ECO:0000318"/>
    <property type="project" value="GO_Central"/>
</dbReference>
<dbReference type="GO" id="GO:0008745">
    <property type="term" value="F:N-acetylmuramoyl-L-alanine amidase activity"/>
    <property type="evidence" value="ECO:0007669"/>
    <property type="project" value="UniProtKB-EC"/>
</dbReference>
<dbReference type="GO" id="GO:0071555">
    <property type="term" value="P:cell wall organization"/>
    <property type="evidence" value="ECO:0007669"/>
    <property type="project" value="UniProtKB-KW"/>
</dbReference>
<dbReference type="GO" id="GO:0042742">
    <property type="term" value="P:defense response to bacterium"/>
    <property type="evidence" value="ECO:0007669"/>
    <property type="project" value="UniProtKB-KW"/>
</dbReference>
<dbReference type="GO" id="GO:0031640">
    <property type="term" value="P:killing of cells of another organism"/>
    <property type="evidence" value="ECO:0007669"/>
    <property type="project" value="UniProtKB-KW"/>
</dbReference>
<dbReference type="CDD" id="cd00118">
    <property type="entry name" value="LysM"/>
    <property type="match status" value="2"/>
</dbReference>
<dbReference type="Gene3D" id="3.90.1720.10">
    <property type="entry name" value="endopeptidase domain like (from Nostoc punctiforme)"/>
    <property type="match status" value="1"/>
</dbReference>
<dbReference type="Gene3D" id="3.10.350.10">
    <property type="entry name" value="LysM domain"/>
    <property type="match status" value="2"/>
</dbReference>
<dbReference type="InterPro" id="IPR007921">
    <property type="entry name" value="CHAP_dom"/>
</dbReference>
<dbReference type="InterPro" id="IPR018392">
    <property type="entry name" value="LysM_dom"/>
</dbReference>
<dbReference type="InterPro" id="IPR036779">
    <property type="entry name" value="LysM_dom_sf"/>
</dbReference>
<dbReference type="InterPro" id="IPR038765">
    <property type="entry name" value="Papain-like_cys_pep_sf"/>
</dbReference>
<dbReference type="PANTHER" id="PTHR33734">
    <property type="entry name" value="LYSM DOMAIN-CONTAINING GPI-ANCHORED PROTEIN 2"/>
    <property type="match status" value="1"/>
</dbReference>
<dbReference type="PANTHER" id="PTHR33734:SF22">
    <property type="entry name" value="MEMBRANE-BOUND LYTIC MUREIN TRANSGLYCOSYLASE D"/>
    <property type="match status" value="1"/>
</dbReference>
<dbReference type="Pfam" id="PF05257">
    <property type="entry name" value="CHAP"/>
    <property type="match status" value="1"/>
</dbReference>
<dbReference type="Pfam" id="PF01476">
    <property type="entry name" value="LysM"/>
    <property type="match status" value="2"/>
</dbReference>
<dbReference type="SMART" id="SM00257">
    <property type="entry name" value="LysM"/>
    <property type="match status" value="2"/>
</dbReference>
<dbReference type="SUPFAM" id="SSF54001">
    <property type="entry name" value="Cysteine proteinases"/>
    <property type="match status" value="1"/>
</dbReference>
<dbReference type="SUPFAM" id="SSF54106">
    <property type="entry name" value="LysM domain"/>
    <property type="match status" value="2"/>
</dbReference>
<dbReference type="PROSITE" id="PS50911">
    <property type="entry name" value="CHAP"/>
    <property type="match status" value="1"/>
</dbReference>
<dbReference type="PROSITE" id="PS51782">
    <property type="entry name" value="LYSM"/>
    <property type="match status" value="2"/>
</dbReference>
<comment type="function">
    <text evidence="5">Has weak lytic activity toward S.aureus cells.</text>
</comment>
<comment type="catalytic activity">
    <reaction evidence="5">
        <text>Hydrolyzes the link between N-acetylmuramoyl residues and L-amino acid residues in certain cell-wall glycopeptides.</text>
        <dbReference type="EC" id="3.5.1.28"/>
    </reaction>
</comment>
<sequence length="265" mass="28187">MKKLAFAITATSGAAAFLTHHDAQASTQHTVQSGESLWSIAQKYNTSVESIKQNNQLDNNLVFPGQVISVGGSDAQNTSNTSPQAGSASSHTVQAGESLNIIASRYGVSVDQLMAANNLRGYLIMPNQTLQIPNGGSGGTTPTATTGSNGNASSFNHQNLYTAGQCTWYVFDRRAQAGSPISTYWSDAKYWAGNAANDGYQVNNTPSVGSIMQSTPGPYGHVAYVERVNGDGSILISEMNYTYGPYNMNYRTIPASEVSSYAFIH</sequence>
<reference key="1">
    <citation type="book" date="2006" name="Gram positive pathogens, 2nd edition">
        <title>The Staphylococcus aureus NCTC 8325 genome.</title>
        <editorList>
            <person name="Fischetti V."/>
            <person name="Novick R."/>
            <person name="Ferretti J."/>
            <person name="Portnoy D."/>
            <person name="Rood J."/>
        </editorList>
        <authorList>
            <person name="Gillaspy A.F."/>
            <person name="Worrell V."/>
            <person name="Orvis J."/>
            <person name="Roe B.A."/>
            <person name="Dyer D.W."/>
            <person name="Iandolo J.J."/>
        </authorList>
    </citation>
    <scope>NUCLEOTIDE SEQUENCE [LARGE SCALE GENOMIC DNA]</scope>
    <source>
        <strain>NCTC 8325 / PS 47</strain>
    </source>
</reference>
<reference key="2">
    <citation type="journal article" date="2015" name="Appl. Microbiol. Biotechnol.">
        <title>Discovery of novel S. aureus autolysins and molecular engineering to enhance bacteriolytic activity.</title>
        <authorList>
            <person name="Osipovitch D.C."/>
            <person name="Therrien S."/>
            <person name="Griswold K.E."/>
        </authorList>
    </citation>
    <scope>FUNCTION</scope>
    <scope>CATALYTIC ACTIVITY</scope>
    <source>
        <strain>ATCC 35556 / SA113</strain>
    </source>
</reference>
<gene>
    <name evidence="7" type="ordered locus">SAOUHSC_00671</name>
</gene>
<organism>
    <name type="scientific">Staphylococcus aureus (strain NCTC 8325 / PS 47)</name>
    <dbReference type="NCBI Taxonomy" id="93061"/>
    <lineage>
        <taxon>Bacteria</taxon>
        <taxon>Bacillati</taxon>
        <taxon>Bacillota</taxon>
        <taxon>Bacilli</taxon>
        <taxon>Bacillales</taxon>
        <taxon>Staphylococcaceae</taxon>
        <taxon>Staphylococcus</taxon>
    </lineage>
</organism>
<keyword id="KW-0929">Antimicrobial</keyword>
<keyword id="KW-0081">Bacteriolytic enzyme</keyword>
<keyword id="KW-0961">Cell wall biogenesis/degradation</keyword>
<keyword id="KW-0378">Hydrolase</keyword>
<keyword id="KW-1185">Reference proteome</keyword>
<keyword id="KW-0677">Repeat</keyword>
<keyword id="KW-0732">Signal</keyword>